<sequence length="375" mass="43871">MIDLFDFVVLSSFIILLPLVTDFLNNTFPNAKIGRLAQEVVGMILVFFIVSLIFAGVSLWYTHFLPFYYTKSLLISFDTLNLLDLLKFINTDNNNNSGSSIFNKITFYFHIFFTIQLVVNLYYYYYQTITADNFLPKISKNKQIQLFASETTTTTTTTTDNINEKKNKLCGLCDQVSDGKWSTINKPKSHHCRICKRCIDSMDHHCPFAANCIGINNHHYFILFIGYTVMALIYACYLSFFPYYHCIVNYKNYVSLSFTNDNDNDNNNNNNFKQLAQSCAKFNKYSFIFLCCCLIVTASFGILLFQTYLIITNSKTVQLLSRLKKSKSFLDWFKWLYQNFKQNASINNIYSLFPNFKFYNLIIPYYKRKINKLNK</sequence>
<feature type="chain" id="PRO_0000262947" description="Putative ZDHHC-type palmitoyltransferase 8">
    <location>
        <begin position="1"/>
        <end position="375"/>
    </location>
</feature>
<feature type="transmembrane region" description="Helical" evidence="2">
    <location>
        <begin position="4"/>
        <end position="24"/>
    </location>
</feature>
<feature type="transmembrane region" description="Helical" evidence="2">
    <location>
        <begin position="40"/>
        <end position="60"/>
    </location>
</feature>
<feature type="transmembrane region" description="Helical" evidence="2">
    <location>
        <begin position="105"/>
        <end position="125"/>
    </location>
</feature>
<feature type="transmembrane region" description="Helical" evidence="2">
    <location>
        <begin position="221"/>
        <end position="241"/>
    </location>
</feature>
<feature type="transmembrane region" description="Helical" evidence="2">
    <location>
        <begin position="285"/>
        <end position="305"/>
    </location>
</feature>
<feature type="domain" description="DHHC" evidence="3">
    <location>
        <begin position="176"/>
        <end position="226"/>
    </location>
</feature>
<feature type="glycosylation site" description="N-linked (GlcNAc...) asparagine" evidence="2">
    <location>
        <position position="95"/>
    </location>
</feature>
<feature type="glycosylation site" description="N-linked (GlcNAc...) asparagine" evidence="2">
    <location>
        <position position="343"/>
    </location>
</feature>
<feature type="sequence conflict" description="In Ref. 2; C92145." evidence="4" ref="2">
    <original>N</original>
    <variation>K</variation>
    <location>
        <position position="90"/>
    </location>
</feature>
<proteinExistence type="evidence at transcript level"/>
<dbReference type="EC" id="2.3.1.225"/>
<dbReference type="EMBL" id="AAFI02000035">
    <property type="protein sequence ID" value="EAL67391.1"/>
    <property type="molecule type" value="Genomic_DNA"/>
</dbReference>
<dbReference type="EMBL" id="BJ358938">
    <property type="status" value="NOT_ANNOTATED_CDS"/>
    <property type="molecule type" value="mRNA"/>
</dbReference>
<dbReference type="EMBL" id="BJ372294">
    <property type="status" value="NOT_ANNOTATED_CDS"/>
    <property type="molecule type" value="mRNA"/>
</dbReference>
<dbReference type="EMBL" id="C92145">
    <property type="status" value="NOT_ANNOTATED_CDS"/>
    <property type="molecule type" value="mRNA"/>
</dbReference>
<dbReference type="RefSeq" id="XP_641378.1">
    <property type="nucleotide sequence ID" value="XM_636286.1"/>
</dbReference>
<dbReference type="STRING" id="44689.Q54VH7"/>
<dbReference type="GlyGen" id="Q54VH7">
    <property type="glycosylation" value="2 sites"/>
</dbReference>
<dbReference type="PaxDb" id="44689-DDB0233686"/>
<dbReference type="EnsemblProtists" id="EAL67391">
    <property type="protein sequence ID" value="EAL67391"/>
    <property type="gene ID" value="DDB_G0280329"/>
</dbReference>
<dbReference type="GeneID" id="8622512"/>
<dbReference type="KEGG" id="ddi:DDB_G0280329"/>
<dbReference type="dictyBase" id="DDB_G0280329"/>
<dbReference type="VEuPathDB" id="AmoebaDB:DDB_G0280329"/>
<dbReference type="eggNOG" id="KOG1311">
    <property type="taxonomic scope" value="Eukaryota"/>
</dbReference>
<dbReference type="HOGENOM" id="CLU_738571_0_0_1"/>
<dbReference type="InParanoid" id="Q54VH7"/>
<dbReference type="OMA" id="GTHHCSW"/>
<dbReference type="PhylomeDB" id="Q54VH7"/>
<dbReference type="PRO" id="PR:Q54VH7"/>
<dbReference type="Proteomes" id="UP000002195">
    <property type="component" value="Chromosome 3"/>
</dbReference>
<dbReference type="GO" id="GO:0005783">
    <property type="term" value="C:endoplasmic reticulum"/>
    <property type="evidence" value="ECO:0000318"/>
    <property type="project" value="GO_Central"/>
</dbReference>
<dbReference type="GO" id="GO:0005794">
    <property type="term" value="C:Golgi apparatus"/>
    <property type="evidence" value="ECO:0000318"/>
    <property type="project" value="GO_Central"/>
</dbReference>
<dbReference type="GO" id="GO:0016020">
    <property type="term" value="C:membrane"/>
    <property type="evidence" value="ECO:0007669"/>
    <property type="project" value="UniProtKB-SubCell"/>
</dbReference>
<dbReference type="GO" id="GO:0019706">
    <property type="term" value="F:protein-cysteine S-palmitoyltransferase activity"/>
    <property type="evidence" value="ECO:0000318"/>
    <property type="project" value="GO_Central"/>
</dbReference>
<dbReference type="GO" id="GO:0006612">
    <property type="term" value="P:protein targeting to membrane"/>
    <property type="evidence" value="ECO:0000318"/>
    <property type="project" value="GO_Central"/>
</dbReference>
<dbReference type="InterPro" id="IPR001594">
    <property type="entry name" value="Palmitoyltrfase_DHHC"/>
</dbReference>
<dbReference type="InterPro" id="IPR039859">
    <property type="entry name" value="PFA4/ZDH16/20/ERF2-like"/>
</dbReference>
<dbReference type="PANTHER" id="PTHR12246">
    <property type="entry name" value="PALMITOYLTRANSFERASE ZDHHC16"/>
    <property type="match status" value="1"/>
</dbReference>
<dbReference type="Pfam" id="PF01529">
    <property type="entry name" value="DHHC"/>
    <property type="match status" value="1"/>
</dbReference>
<dbReference type="PROSITE" id="PS50216">
    <property type="entry name" value="DHHC"/>
    <property type="match status" value="1"/>
</dbReference>
<protein>
    <recommendedName>
        <fullName>Putative ZDHHC-type palmitoyltransferase 8</fullName>
        <ecNumber>2.3.1.225</ecNumber>
    </recommendedName>
    <alternativeName>
        <fullName>Zinc finger DHHC domain-containing protein 8</fullName>
    </alternativeName>
</protein>
<reference evidence="4 5" key="1">
    <citation type="journal article" date="2005" name="Nature">
        <title>The genome of the social amoeba Dictyostelium discoideum.</title>
        <authorList>
            <person name="Eichinger L."/>
            <person name="Pachebat J.A."/>
            <person name="Gloeckner G."/>
            <person name="Rajandream M.A."/>
            <person name="Sucgang R."/>
            <person name="Berriman M."/>
            <person name="Song J."/>
            <person name="Olsen R."/>
            <person name="Szafranski K."/>
            <person name="Xu Q."/>
            <person name="Tunggal B."/>
            <person name="Kummerfeld S."/>
            <person name="Madera M."/>
            <person name="Konfortov B.A."/>
            <person name="Rivero F."/>
            <person name="Bankier A.T."/>
            <person name="Lehmann R."/>
            <person name="Hamlin N."/>
            <person name="Davies R."/>
            <person name="Gaudet P."/>
            <person name="Fey P."/>
            <person name="Pilcher K."/>
            <person name="Chen G."/>
            <person name="Saunders D."/>
            <person name="Sodergren E.J."/>
            <person name="Davis P."/>
            <person name="Kerhornou A."/>
            <person name="Nie X."/>
            <person name="Hall N."/>
            <person name="Anjard C."/>
            <person name="Hemphill L."/>
            <person name="Bason N."/>
            <person name="Farbrother P."/>
            <person name="Desany B."/>
            <person name="Just E."/>
            <person name="Morio T."/>
            <person name="Rost R."/>
            <person name="Churcher C.M."/>
            <person name="Cooper J."/>
            <person name="Haydock S."/>
            <person name="van Driessche N."/>
            <person name="Cronin A."/>
            <person name="Goodhead I."/>
            <person name="Muzny D.M."/>
            <person name="Mourier T."/>
            <person name="Pain A."/>
            <person name="Lu M."/>
            <person name="Harper D."/>
            <person name="Lindsay R."/>
            <person name="Hauser H."/>
            <person name="James K.D."/>
            <person name="Quiles M."/>
            <person name="Madan Babu M."/>
            <person name="Saito T."/>
            <person name="Buchrieser C."/>
            <person name="Wardroper A."/>
            <person name="Felder M."/>
            <person name="Thangavelu M."/>
            <person name="Johnson D."/>
            <person name="Knights A."/>
            <person name="Loulseged H."/>
            <person name="Mungall K.L."/>
            <person name="Oliver K."/>
            <person name="Price C."/>
            <person name="Quail M.A."/>
            <person name="Urushihara H."/>
            <person name="Hernandez J."/>
            <person name="Rabbinowitsch E."/>
            <person name="Steffen D."/>
            <person name="Sanders M."/>
            <person name="Ma J."/>
            <person name="Kohara Y."/>
            <person name="Sharp S."/>
            <person name="Simmonds M.N."/>
            <person name="Spiegler S."/>
            <person name="Tivey A."/>
            <person name="Sugano S."/>
            <person name="White B."/>
            <person name="Walker D."/>
            <person name="Woodward J.R."/>
            <person name="Winckler T."/>
            <person name="Tanaka Y."/>
            <person name="Shaulsky G."/>
            <person name="Schleicher M."/>
            <person name="Weinstock G.M."/>
            <person name="Rosenthal A."/>
            <person name="Cox E.C."/>
            <person name="Chisholm R.L."/>
            <person name="Gibbs R.A."/>
            <person name="Loomis W.F."/>
            <person name="Platzer M."/>
            <person name="Kay R.R."/>
            <person name="Williams J.G."/>
            <person name="Dear P.H."/>
            <person name="Noegel A.A."/>
            <person name="Barrell B.G."/>
            <person name="Kuspa A."/>
        </authorList>
    </citation>
    <scope>NUCLEOTIDE SEQUENCE [LARGE SCALE GENOMIC DNA]</scope>
    <source>
        <strain evidence="5">AX4</strain>
    </source>
</reference>
<reference key="2">
    <citation type="journal article" date="2004" name="Nucleic Acids Res.">
        <title>Analyses of cDNAs from growth and slug stages of Dictyostelium discoideum.</title>
        <authorList>
            <person name="Urushihara H."/>
            <person name="Morio T."/>
            <person name="Saito T."/>
            <person name="Kohara Y."/>
            <person name="Koriki E."/>
            <person name="Ochiai H."/>
            <person name="Maeda M."/>
            <person name="Williams J.G."/>
            <person name="Takeuchi I."/>
            <person name="Tanaka Y."/>
        </authorList>
    </citation>
    <scope>NUCLEOTIDE SEQUENCE [LARGE SCALE MRNA]</scope>
    <source>
        <strain>AX4</strain>
    </source>
</reference>
<gene>
    <name type="ORF">DDB_G0280329</name>
</gene>
<comment type="catalytic activity">
    <reaction>
        <text>L-cysteinyl-[protein] + hexadecanoyl-CoA = S-hexadecanoyl-L-cysteinyl-[protein] + CoA</text>
        <dbReference type="Rhea" id="RHEA:36683"/>
        <dbReference type="Rhea" id="RHEA-COMP:10131"/>
        <dbReference type="Rhea" id="RHEA-COMP:11032"/>
        <dbReference type="ChEBI" id="CHEBI:29950"/>
        <dbReference type="ChEBI" id="CHEBI:57287"/>
        <dbReference type="ChEBI" id="CHEBI:57379"/>
        <dbReference type="ChEBI" id="CHEBI:74151"/>
        <dbReference type="EC" id="2.3.1.225"/>
    </reaction>
</comment>
<comment type="subcellular location">
    <subcellularLocation>
        <location evidence="2">Membrane</location>
        <topology evidence="2">Multi-pass membrane protein</topology>
    </subcellularLocation>
</comment>
<comment type="domain">
    <text evidence="1">The DHHC domain is required for palmitoyltransferase activity.</text>
</comment>
<comment type="similarity">
    <text evidence="4">Belongs to the DHHC palmitoyltransferase family.</text>
</comment>
<accession>Q54VH7</accession>
<keyword id="KW-0012">Acyltransferase</keyword>
<keyword id="KW-0325">Glycoprotein</keyword>
<keyword id="KW-0449">Lipoprotein</keyword>
<keyword id="KW-0472">Membrane</keyword>
<keyword id="KW-0564">Palmitate</keyword>
<keyword id="KW-1185">Reference proteome</keyword>
<keyword id="KW-0808">Transferase</keyword>
<keyword id="KW-0812">Transmembrane</keyword>
<keyword id="KW-1133">Transmembrane helix</keyword>
<evidence type="ECO:0000250" key="1"/>
<evidence type="ECO:0000255" key="2"/>
<evidence type="ECO:0000255" key="3">
    <source>
        <dbReference type="PROSITE-ProRule" id="PRU00067"/>
    </source>
</evidence>
<evidence type="ECO:0000305" key="4"/>
<evidence type="ECO:0000312" key="5">
    <source>
        <dbReference type="EMBL" id="EAL67391.1"/>
    </source>
</evidence>
<organism>
    <name type="scientific">Dictyostelium discoideum</name>
    <name type="common">Social amoeba</name>
    <dbReference type="NCBI Taxonomy" id="44689"/>
    <lineage>
        <taxon>Eukaryota</taxon>
        <taxon>Amoebozoa</taxon>
        <taxon>Evosea</taxon>
        <taxon>Eumycetozoa</taxon>
        <taxon>Dictyostelia</taxon>
        <taxon>Dictyosteliales</taxon>
        <taxon>Dictyosteliaceae</taxon>
        <taxon>Dictyostelium</taxon>
    </lineage>
</organism>
<name>ZDHC8_DICDI</name>